<reference key="1">
    <citation type="journal article" date="2009" name="Mol. Biol. Evol.">
        <title>Molecular evolution, functional variation, and proposed nomenclature of the gene family that includes sphingomyelinase D in sicariid spider venoms.</title>
        <authorList>
            <person name="Binford G.J."/>
            <person name="Bodner M.R."/>
            <person name="Cordes M.H."/>
            <person name="Baldwin K.L."/>
            <person name="Rynerson M.R."/>
            <person name="Burns S.N."/>
            <person name="Zobel-Thropp P.A."/>
        </authorList>
    </citation>
    <scope>NUCLEOTIDE SEQUENCE [MRNA]</scope>
    <scope>NOMENCLATURE</scope>
    <source>
        <tissue>Venom gland</tissue>
    </source>
</reference>
<proteinExistence type="evidence at transcript level"/>
<comment type="function">
    <text evidence="1 3">Dermonecrotic toxins cleave the phosphodiester linkage between the phosphate and headgroup of certain phospholipids (sphingolipid and lysolipid substrates), forming an alcohol (often choline) and a cyclic phosphate (By similarity). This toxin acts on sphingomyelin (SM) (By similarity). It may also act on ceramide phosphoethanolamine (CPE), lysophosphatidylcholine (LPC) and lysophosphatidylethanolamine (LPE), but not on lysophosphatidylserine (LPS), and lysophosphatidylglycerol (LPG) (By similarity). It acts by transphosphatidylation, releasing exclusively cyclic phosphate products as second products (By similarity). Induces dermonecrosis, hemolysis, increased vascular permeability, edema, inflammatory response, and platelet aggregation (By similarity).</text>
</comment>
<comment type="catalytic activity">
    <reaction evidence="1">
        <text>an N-(acyl)-sphingosylphosphocholine = an N-(acyl)-sphingosyl-1,3-cyclic phosphate + choline</text>
        <dbReference type="Rhea" id="RHEA:60652"/>
        <dbReference type="ChEBI" id="CHEBI:15354"/>
        <dbReference type="ChEBI" id="CHEBI:64583"/>
        <dbReference type="ChEBI" id="CHEBI:143892"/>
    </reaction>
</comment>
<comment type="catalytic activity">
    <reaction evidence="1">
        <text>an N-(acyl)-sphingosylphosphoethanolamine = an N-(acyl)-sphingosyl-1,3-cyclic phosphate + ethanolamine</text>
        <dbReference type="Rhea" id="RHEA:60648"/>
        <dbReference type="ChEBI" id="CHEBI:57603"/>
        <dbReference type="ChEBI" id="CHEBI:143891"/>
        <dbReference type="ChEBI" id="CHEBI:143892"/>
    </reaction>
</comment>
<comment type="catalytic activity">
    <reaction evidence="1">
        <text>a 1-acyl-sn-glycero-3-phosphocholine = a 1-acyl-sn-glycero-2,3-cyclic phosphate + choline</text>
        <dbReference type="Rhea" id="RHEA:60700"/>
        <dbReference type="ChEBI" id="CHEBI:15354"/>
        <dbReference type="ChEBI" id="CHEBI:58168"/>
        <dbReference type="ChEBI" id="CHEBI:143947"/>
    </reaction>
</comment>
<comment type="catalytic activity">
    <reaction evidence="1">
        <text>a 1-acyl-sn-glycero-3-phosphoethanolamine = a 1-acyl-sn-glycero-2,3-cyclic phosphate + ethanolamine</text>
        <dbReference type="Rhea" id="RHEA:60704"/>
        <dbReference type="ChEBI" id="CHEBI:57603"/>
        <dbReference type="ChEBI" id="CHEBI:64381"/>
        <dbReference type="ChEBI" id="CHEBI:143947"/>
    </reaction>
</comment>
<comment type="cofactor">
    <cofactor evidence="5">
        <name>Mg(2+)</name>
        <dbReference type="ChEBI" id="CHEBI:18420"/>
    </cofactor>
    <text evidence="5">Binds 1 Mg(2+) ion per subunit.</text>
</comment>
<comment type="subcellular location">
    <subcellularLocation>
        <location evidence="8">Secreted</location>
    </subcellularLocation>
</comment>
<comment type="tissue specificity">
    <text evidence="8">Expressed by the venom gland.</text>
</comment>
<comment type="similarity">
    <text evidence="7">Belongs to the arthropod phospholipase D family. Class II subfamily.</text>
</comment>
<comment type="caution">
    <text evidence="1 2 4">The most common activity assay for dermonecrotic toxins detects enzymatic activity by monitoring choline release from substrate. Liberation of choline from sphingomyelin (SM) or lysophosphatidylcholine (LPC) is commonly assumed to result from substrate hydrolysis, giving either ceramide-1-phosphate (C1P) or lysophosphatidic acid (LPA), respectively, as a second product. However, two studies from Lajoie and colleagues (2013 and 2015) report the observation of exclusive formation of cyclic phosphate products as second products, resulting from intramolecular transphosphatidylation. Cyclic phosphates have vastly different biological properties from their monoester counterparts, and they may be relevant to the pathology of brown spider envenomation.</text>
</comment>
<sequence length="273" mass="30448">WIMGHMVNAIGQIDEFVNLGANSIETDVSFDDSANPQYTYHGVPCDCGRSCLKWENYNDFLKGLRSATTPGNSKYQSKLVLVVFDLKTGSLYDNQANEAGKKLAKNLLQHYWNNGNNGGRAYIVLSIPDLNHYPLIKGFTDTLTQEGHPELLDEVGYDFSGNDAIGDVANAYKKAGVTGHVWQSDGITNCLLRGLTRVREAVANRDSGKGYINKVYYWTVDKRASTRDALDAGVDGVMTNYPDVITDVMNEAAYKNKFRLATYEDNPWETFKK</sequence>
<accession>C0JAT3</accession>
<evidence type="ECO:0000250" key="1">
    <source>
        <dbReference type="UniProtKB" id="A0A0D4WTV1"/>
    </source>
</evidence>
<evidence type="ECO:0000250" key="2">
    <source>
        <dbReference type="UniProtKB" id="A0A0D4WV12"/>
    </source>
</evidence>
<evidence type="ECO:0000250" key="3">
    <source>
        <dbReference type="UniProtKB" id="P0CE80"/>
    </source>
</evidence>
<evidence type="ECO:0000250" key="4">
    <source>
        <dbReference type="UniProtKB" id="Q4ZFU2"/>
    </source>
</evidence>
<evidence type="ECO:0000250" key="5">
    <source>
        <dbReference type="UniProtKB" id="Q8I914"/>
    </source>
</evidence>
<evidence type="ECO:0000303" key="6">
    <source>
    </source>
</evidence>
<evidence type="ECO:0000305" key="7"/>
<evidence type="ECO:0000305" key="8">
    <source>
    </source>
</evidence>
<name>A1I4_LOXSP</name>
<organism>
    <name type="scientific">Loxosceles spadicea</name>
    <name type="common">Recluse spider</name>
    <dbReference type="NCBI Taxonomy" id="571530"/>
    <lineage>
        <taxon>Eukaryota</taxon>
        <taxon>Metazoa</taxon>
        <taxon>Ecdysozoa</taxon>
        <taxon>Arthropoda</taxon>
        <taxon>Chelicerata</taxon>
        <taxon>Arachnida</taxon>
        <taxon>Araneae</taxon>
        <taxon>Araneomorphae</taxon>
        <taxon>Haplogynae</taxon>
        <taxon>Scytodoidea</taxon>
        <taxon>Sicariidae</taxon>
        <taxon>Loxosceles</taxon>
    </lineage>
</organism>
<protein>
    <recommendedName>
        <fullName evidence="6">Dermonecrotic toxin LspaSicTox-alphaIA2iv</fullName>
        <ecNumber evidence="4">4.6.1.-</ecNumber>
    </recommendedName>
    <alternativeName>
        <fullName>Phospholipase D</fullName>
        <shortName>PLD</shortName>
    </alternativeName>
    <alternativeName>
        <fullName>Sphingomyelin phosphodiesterase D</fullName>
        <shortName>SMD</shortName>
        <shortName>SMase D</shortName>
        <shortName>Sphingomyelinase D</shortName>
    </alternativeName>
</protein>
<feature type="chain" id="PRO_0000392746" description="Dermonecrotic toxin LspaSicTox-alphaIA2iv">
    <location>
        <begin position="1" status="less than"/>
        <end position="273"/>
    </location>
</feature>
<feature type="active site" evidence="5">
    <location>
        <position position="5"/>
    </location>
</feature>
<feature type="active site" description="Nucleophile" evidence="5">
    <location>
        <position position="41"/>
    </location>
</feature>
<feature type="binding site" evidence="5">
    <location>
        <position position="25"/>
    </location>
    <ligand>
        <name>Mg(2+)</name>
        <dbReference type="ChEBI" id="CHEBI:18420"/>
    </ligand>
</feature>
<feature type="binding site" evidence="5">
    <location>
        <position position="27"/>
    </location>
    <ligand>
        <name>Mg(2+)</name>
        <dbReference type="ChEBI" id="CHEBI:18420"/>
    </ligand>
</feature>
<feature type="binding site" evidence="5">
    <location>
        <position position="85"/>
    </location>
    <ligand>
        <name>Mg(2+)</name>
        <dbReference type="ChEBI" id="CHEBI:18420"/>
    </ligand>
</feature>
<feature type="disulfide bond" evidence="3">
    <location>
        <begin position="45"/>
        <end position="51"/>
    </location>
</feature>
<feature type="disulfide bond" evidence="3">
    <location>
        <begin position="47"/>
        <end position="190"/>
    </location>
</feature>
<feature type="non-terminal residue">
    <location>
        <position position="1"/>
    </location>
</feature>
<dbReference type="EC" id="4.6.1.-" evidence="4"/>
<dbReference type="EMBL" id="FJ171368">
    <property type="protein sequence ID" value="ACN48864.1"/>
    <property type="molecule type" value="mRNA"/>
</dbReference>
<dbReference type="SMR" id="C0JAT3"/>
<dbReference type="GO" id="GO:0005576">
    <property type="term" value="C:extracellular region"/>
    <property type="evidence" value="ECO:0007669"/>
    <property type="project" value="UniProtKB-SubCell"/>
</dbReference>
<dbReference type="GO" id="GO:0016829">
    <property type="term" value="F:lyase activity"/>
    <property type="evidence" value="ECO:0007669"/>
    <property type="project" value="UniProtKB-KW"/>
</dbReference>
<dbReference type="GO" id="GO:0046872">
    <property type="term" value="F:metal ion binding"/>
    <property type="evidence" value="ECO:0007669"/>
    <property type="project" value="UniProtKB-KW"/>
</dbReference>
<dbReference type="GO" id="GO:0008081">
    <property type="term" value="F:phosphoric diester hydrolase activity"/>
    <property type="evidence" value="ECO:0007669"/>
    <property type="project" value="InterPro"/>
</dbReference>
<dbReference type="GO" id="GO:0090729">
    <property type="term" value="F:toxin activity"/>
    <property type="evidence" value="ECO:0007669"/>
    <property type="project" value="UniProtKB-KW"/>
</dbReference>
<dbReference type="GO" id="GO:0031640">
    <property type="term" value="P:killing of cells of another organism"/>
    <property type="evidence" value="ECO:0007669"/>
    <property type="project" value="UniProtKB-KW"/>
</dbReference>
<dbReference type="GO" id="GO:0016042">
    <property type="term" value="P:lipid catabolic process"/>
    <property type="evidence" value="ECO:0007669"/>
    <property type="project" value="UniProtKB-KW"/>
</dbReference>
<dbReference type="CDD" id="cd08576">
    <property type="entry name" value="GDPD_like_SMaseD_PLD"/>
    <property type="match status" value="1"/>
</dbReference>
<dbReference type="Gene3D" id="3.20.20.190">
    <property type="entry name" value="Phosphatidylinositol (PI) phosphodiesterase"/>
    <property type="match status" value="1"/>
</dbReference>
<dbReference type="InterPro" id="IPR017946">
    <property type="entry name" value="PLC-like_Pdiesterase_TIM-brl"/>
</dbReference>
<dbReference type="Pfam" id="PF13653">
    <property type="entry name" value="GDPD_2"/>
    <property type="match status" value="1"/>
</dbReference>
<dbReference type="SUPFAM" id="SSF51695">
    <property type="entry name" value="PLC-like phosphodiesterases"/>
    <property type="match status" value="1"/>
</dbReference>
<keyword id="KW-0204">Cytolysis</keyword>
<keyword id="KW-1061">Dermonecrotic toxin</keyword>
<keyword id="KW-1015">Disulfide bond</keyword>
<keyword id="KW-0354">Hemolysis</keyword>
<keyword id="KW-0442">Lipid degradation</keyword>
<keyword id="KW-0443">Lipid metabolism</keyword>
<keyword id="KW-0456">Lyase</keyword>
<keyword id="KW-0460">Magnesium</keyword>
<keyword id="KW-0479">Metal-binding</keyword>
<keyword id="KW-0964">Secreted</keyword>
<keyword id="KW-0800">Toxin</keyword>